<proteinExistence type="inferred from homology"/>
<evidence type="ECO:0000250" key="1"/>
<evidence type="ECO:0000305" key="2"/>
<organism>
    <name type="scientific">Xanthomonas oryzae pv. oryzae (strain KACC10331 / KXO85)</name>
    <dbReference type="NCBI Taxonomy" id="291331"/>
    <lineage>
        <taxon>Bacteria</taxon>
        <taxon>Pseudomonadati</taxon>
        <taxon>Pseudomonadota</taxon>
        <taxon>Gammaproteobacteria</taxon>
        <taxon>Lysobacterales</taxon>
        <taxon>Lysobacteraceae</taxon>
        <taxon>Xanthomonas</taxon>
    </lineage>
</organism>
<comment type="function">
    <text evidence="1">Modulates RecA activity.</text>
</comment>
<comment type="subcellular location">
    <subcellularLocation>
        <location evidence="2">Cytoplasm</location>
    </subcellularLocation>
</comment>
<comment type="similarity">
    <text evidence="2">Belongs to the RecX family.</text>
</comment>
<comment type="sequence caution" evidence="2">
    <conflict type="erroneous initiation">
        <sequence resource="EMBL-CDS" id="AAW76194"/>
    </conflict>
</comment>
<dbReference type="EMBL" id="AF316876">
    <property type="protein sequence ID" value="AAK06594.1"/>
    <property type="molecule type" value="Genomic_DNA"/>
</dbReference>
<dbReference type="EMBL" id="AF399932">
    <property type="protein sequence ID" value="AAK85396.1"/>
    <property type="molecule type" value="Genomic_DNA"/>
</dbReference>
<dbReference type="EMBL" id="AE013598">
    <property type="protein sequence ID" value="AAW76194.1"/>
    <property type="status" value="ALT_INIT"/>
    <property type="molecule type" value="Genomic_DNA"/>
</dbReference>
<dbReference type="SMR" id="Q9AP31"/>
<dbReference type="STRING" id="291331.XOO2940"/>
<dbReference type="KEGG" id="xoo:XOO2940"/>
<dbReference type="HOGENOM" id="CLU_066607_3_2_6"/>
<dbReference type="Proteomes" id="UP000006735">
    <property type="component" value="Chromosome"/>
</dbReference>
<dbReference type="GO" id="GO:0005737">
    <property type="term" value="C:cytoplasm"/>
    <property type="evidence" value="ECO:0007669"/>
    <property type="project" value="UniProtKB-SubCell"/>
</dbReference>
<dbReference type="GO" id="GO:0006282">
    <property type="term" value="P:regulation of DNA repair"/>
    <property type="evidence" value="ECO:0007669"/>
    <property type="project" value="UniProtKB-UniRule"/>
</dbReference>
<dbReference type="Gene3D" id="1.10.10.10">
    <property type="entry name" value="Winged helix-like DNA-binding domain superfamily/Winged helix DNA-binding domain"/>
    <property type="match status" value="3"/>
</dbReference>
<dbReference type="HAMAP" id="MF_01114">
    <property type="entry name" value="RecX"/>
    <property type="match status" value="1"/>
</dbReference>
<dbReference type="InterPro" id="IPR053926">
    <property type="entry name" value="RecX_HTH_1st"/>
</dbReference>
<dbReference type="InterPro" id="IPR053924">
    <property type="entry name" value="RecX_HTH_2nd"/>
</dbReference>
<dbReference type="InterPro" id="IPR053925">
    <property type="entry name" value="RecX_HTH_3rd"/>
</dbReference>
<dbReference type="InterPro" id="IPR003783">
    <property type="entry name" value="Regulatory_RecX"/>
</dbReference>
<dbReference type="InterPro" id="IPR036388">
    <property type="entry name" value="WH-like_DNA-bd_sf"/>
</dbReference>
<dbReference type="NCBIfam" id="NF001054">
    <property type="entry name" value="PRK00117.2-1"/>
    <property type="match status" value="1"/>
</dbReference>
<dbReference type="PANTHER" id="PTHR33602">
    <property type="entry name" value="REGULATORY PROTEIN RECX FAMILY PROTEIN"/>
    <property type="match status" value="1"/>
</dbReference>
<dbReference type="PANTHER" id="PTHR33602:SF1">
    <property type="entry name" value="REGULATORY PROTEIN RECX FAMILY PROTEIN"/>
    <property type="match status" value="1"/>
</dbReference>
<dbReference type="Pfam" id="PF21982">
    <property type="entry name" value="RecX_HTH1"/>
    <property type="match status" value="1"/>
</dbReference>
<dbReference type="Pfam" id="PF02631">
    <property type="entry name" value="RecX_HTH2"/>
    <property type="match status" value="1"/>
</dbReference>
<dbReference type="Pfam" id="PF21981">
    <property type="entry name" value="RecX_HTH3"/>
    <property type="match status" value="1"/>
</dbReference>
<protein>
    <recommendedName>
        <fullName>Regulatory protein RecX</fullName>
    </recommendedName>
</protein>
<sequence length="162" mass="18164">MNEQEPAPKRGRRFKEQTPVQRALGLLVRREHSRKELNRKLLARGIEPDAAQAAVDRLTGEGWQDDARFAAAVVRNRAGSGYGPLHIRAELGTHGLDSEAISAAMATFQGDWTENARDLIHRRFGEQGPIDLPQRRKAADWLARRGFDGNSIRAATRFDLED</sequence>
<reference key="1">
    <citation type="journal article" date="2001" name="FEMS Microbiol. Lett.">
        <title>Characterization of Xanthomonas oryzae pv. oryzae recX, a gene that is required for high-level expression of recA.</title>
        <authorList>
            <person name="Sukchawalit R."/>
            <person name="Vattanaviboon P."/>
            <person name="Utamapongchai S."/>
            <person name="Vaughn G."/>
            <person name="Mongkolsuk S."/>
        </authorList>
    </citation>
    <scope>NUCLEOTIDE SEQUENCE [GENOMIC DNA]</scope>
</reference>
<reference key="2">
    <citation type="journal article" date="2002" name="FEMS Microbiol. Lett.">
        <title>Genetic organization of the lexA, recA and recX genes in Xanthomonas campestris.</title>
        <authorList>
            <person name="Yang Y.-C."/>
            <person name="Hsu C.-H."/>
            <person name="Chou C.-P."/>
            <person name="Yang M.-K."/>
        </authorList>
    </citation>
    <scope>NUCLEOTIDE SEQUENCE [GENOMIC DNA]</scope>
    <source>
        <strain>XO604</strain>
    </source>
</reference>
<reference key="3">
    <citation type="journal article" date="2005" name="Nucleic Acids Res.">
        <title>The genome sequence of Xanthomonas oryzae pathovar oryzae KACC10331, the bacterial blight pathogen of rice.</title>
        <authorList>
            <person name="Lee B.-M."/>
            <person name="Park Y.-J."/>
            <person name="Park D.-S."/>
            <person name="Kang H.-W."/>
            <person name="Kim J.-G."/>
            <person name="Song E.-S."/>
            <person name="Park I.-C."/>
            <person name="Yoon U.-H."/>
            <person name="Hahn J.-H."/>
            <person name="Koo B.-S."/>
            <person name="Lee G.-B."/>
            <person name="Kim H."/>
            <person name="Park H.-S."/>
            <person name="Yoon K.-O."/>
            <person name="Kim J.-H."/>
            <person name="Jung C.-H."/>
            <person name="Koh N.-H."/>
            <person name="Seo J.-S."/>
            <person name="Go S.-J."/>
        </authorList>
    </citation>
    <scope>NUCLEOTIDE SEQUENCE [LARGE SCALE GENOMIC DNA]</scope>
    <source>
        <strain>KACC10331 / KXO85</strain>
    </source>
</reference>
<keyword id="KW-0963">Cytoplasm</keyword>
<keyword id="KW-1185">Reference proteome</keyword>
<feature type="chain" id="PRO_0000162498" description="Regulatory protein RecX">
    <location>
        <begin position="1"/>
        <end position="162"/>
    </location>
</feature>
<feature type="sequence conflict" description="In Ref. 1; AAK06594." evidence="2" ref="1">
    <original>G</original>
    <variation>D</variation>
    <location>
        <position position="125"/>
    </location>
</feature>
<feature type="sequence conflict" description="In Ref. 1; AAK06594." evidence="2" ref="1">
    <original>RKAADWLARRGFDGNS</original>
    <variation>WQSRRLAGSAWFRRKQ</variation>
    <location>
        <begin position="136"/>
        <end position="151"/>
    </location>
</feature>
<accession>Q9AP31</accession>
<accession>Q5GYM7</accession>
<accession>Q93MR0</accession>
<name>RECX_XANOR</name>
<gene>
    <name type="primary">recX</name>
    <name type="ordered locus">XOO2940</name>
</gene>